<accession>Q5PHC8</accession>
<gene>
    <name evidence="1" type="primary">astC</name>
    <name evidence="1" type="synonym">argM</name>
    <name type="ordered locus">SPA1541</name>
</gene>
<protein>
    <recommendedName>
        <fullName evidence="1">Succinylornithine transaminase</fullName>
        <shortName>SOAT</shortName>
        <ecNumber evidence="1">2.6.1.81</ecNumber>
    </recommendedName>
    <alternativeName>
        <fullName evidence="1">Succinylornithine aminotransferase</fullName>
    </alternativeName>
</protein>
<proteinExistence type="inferred from homology"/>
<evidence type="ECO:0000255" key="1">
    <source>
        <dbReference type="HAMAP-Rule" id="MF_01173"/>
    </source>
</evidence>
<feature type="chain" id="PRO_0000262442" description="Succinylornithine transaminase">
    <location>
        <begin position="1"/>
        <end position="408"/>
    </location>
</feature>
<feature type="modified residue" description="N6-(pyridoxal phosphate)lysine" evidence="1">
    <location>
        <position position="252"/>
    </location>
</feature>
<keyword id="KW-0032">Aminotransferase</keyword>
<keyword id="KW-0056">Arginine metabolism</keyword>
<keyword id="KW-0663">Pyridoxal phosphate</keyword>
<keyword id="KW-0808">Transferase</keyword>
<sequence>MSLSVTRENFDEWMVPVYVPAPLIPVRGEGSRLWDQQGKEYIDFAGGIAVNALGHAHPALREALNEQANRFWHTGNGYTNEPALRLAKKLIDATFAERVFFCNSGAEANEAALKLARKYAHDRVGNHKSGIVAFKNAFHGRTLFTVSAGGQPTYSQDFAPLPPDIRHAAYNDLNSASALIDDNTCAVIVEPVQGEGGVIPATKAFLQGLRELCDRHQALLIFDEVQTGVGRTGKLYAYMHYGVTPDILTTAKALGGGFPIGAMLTTQDYASVMTPGTHGTTYGGNPLATAVAGKVLDIINTPEMQNGVRQRHDAFIERLNTLNVRFGMFSEIRGLGLLLGCVLQTEFAGKAKLIAQEAAKAGVMVLIAGGDVVRFAPALNVSDEEIATGLDRFALACERLQTGGASCG</sequence>
<dbReference type="EC" id="2.6.1.81" evidence="1"/>
<dbReference type="EMBL" id="CP000026">
    <property type="protein sequence ID" value="AAV77474.1"/>
    <property type="molecule type" value="Genomic_DNA"/>
</dbReference>
<dbReference type="RefSeq" id="WP_000059519.1">
    <property type="nucleotide sequence ID" value="NC_006511.1"/>
</dbReference>
<dbReference type="SMR" id="Q5PHC8"/>
<dbReference type="KEGG" id="spt:SPA1541"/>
<dbReference type="HOGENOM" id="CLU_016922_10_1_6"/>
<dbReference type="UniPathway" id="UPA00185">
    <property type="reaction ID" value="UER00281"/>
</dbReference>
<dbReference type="Proteomes" id="UP000008185">
    <property type="component" value="Chromosome"/>
</dbReference>
<dbReference type="GO" id="GO:0042802">
    <property type="term" value="F:identical protein binding"/>
    <property type="evidence" value="ECO:0007669"/>
    <property type="project" value="TreeGrafter"/>
</dbReference>
<dbReference type="GO" id="GO:0030170">
    <property type="term" value="F:pyridoxal phosphate binding"/>
    <property type="evidence" value="ECO:0007669"/>
    <property type="project" value="UniProtKB-UniRule"/>
</dbReference>
<dbReference type="GO" id="GO:0043825">
    <property type="term" value="F:succinylornithine transaminase activity"/>
    <property type="evidence" value="ECO:0007669"/>
    <property type="project" value="UniProtKB-EC"/>
</dbReference>
<dbReference type="GO" id="GO:1901607">
    <property type="term" value="P:alpha-amino acid biosynthetic process"/>
    <property type="evidence" value="ECO:0007669"/>
    <property type="project" value="UniProtKB-ARBA"/>
</dbReference>
<dbReference type="GO" id="GO:0019544">
    <property type="term" value="P:arginine catabolic process to glutamate"/>
    <property type="evidence" value="ECO:0007669"/>
    <property type="project" value="UniProtKB-UniRule"/>
</dbReference>
<dbReference type="GO" id="GO:0019545">
    <property type="term" value="P:arginine catabolic process to succinate"/>
    <property type="evidence" value="ECO:0007669"/>
    <property type="project" value="UniProtKB-UniRule"/>
</dbReference>
<dbReference type="GO" id="GO:0006593">
    <property type="term" value="P:ornithine catabolic process"/>
    <property type="evidence" value="ECO:0007669"/>
    <property type="project" value="InterPro"/>
</dbReference>
<dbReference type="CDD" id="cd00610">
    <property type="entry name" value="OAT_like"/>
    <property type="match status" value="1"/>
</dbReference>
<dbReference type="FunFam" id="3.40.640.10:FF:000004">
    <property type="entry name" value="Acetylornithine aminotransferase"/>
    <property type="match status" value="1"/>
</dbReference>
<dbReference type="Gene3D" id="3.90.1150.10">
    <property type="entry name" value="Aspartate Aminotransferase, domain 1"/>
    <property type="match status" value="1"/>
</dbReference>
<dbReference type="Gene3D" id="3.40.640.10">
    <property type="entry name" value="Type I PLP-dependent aspartate aminotransferase-like (Major domain)"/>
    <property type="match status" value="1"/>
</dbReference>
<dbReference type="HAMAP" id="MF_01107">
    <property type="entry name" value="ArgD_aminotrans_3"/>
    <property type="match status" value="1"/>
</dbReference>
<dbReference type="HAMAP" id="MF_01173">
    <property type="entry name" value="AstC_aminotrans_3"/>
    <property type="match status" value="1"/>
</dbReference>
<dbReference type="InterPro" id="IPR017652">
    <property type="entry name" value="Ac/SucOrn_transaminase_bac"/>
</dbReference>
<dbReference type="InterPro" id="IPR004636">
    <property type="entry name" value="AcOrn/SuccOrn_fam"/>
</dbReference>
<dbReference type="InterPro" id="IPR005814">
    <property type="entry name" value="Aminotrans_3"/>
</dbReference>
<dbReference type="InterPro" id="IPR049704">
    <property type="entry name" value="Aminotrans_3_PPA_site"/>
</dbReference>
<dbReference type="InterPro" id="IPR050103">
    <property type="entry name" value="Class-III_PLP-dep_AT"/>
</dbReference>
<dbReference type="InterPro" id="IPR015424">
    <property type="entry name" value="PyrdxlP-dep_Trfase"/>
</dbReference>
<dbReference type="InterPro" id="IPR015421">
    <property type="entry name" value="PyrdxlP-dep_Trfase_major"/>
</dbReference>
<dbReference type="InterPro" id="IPR015422">
    <property type="entry name" value="PyrdxlP-dep_Trfase_small"/>
</dbReference>
<dbReference type="InterPro" id="IPR001763">
    <property type="entry name" value="Rhodanese-like_dom"/>
</dbReference>
<dbReference type="InterPro" id="IPR026330">
    <property type="entry name" value="SOAT"/>
</dbReference>
<dbReference type="NCBIfam" id="TIGR03246">
    <property type="entry name" value="arg_catab_astC"/>
    <property type="match status" value="1"/>
</dbReference>
<dbReference type="NCBIfam" id="TIGR00707">
    <property type="entry name" value="argD"/>
    <property type="match status" value="1"/>
</dbReference>
<dbReference type="NCBIfam" id="NF002325">
    <property type="entry name" value="PRK01278.1"/>
    <property type="match status" value="1"/>
</dbReference>
<dbReference type="NCBIfam" id="NF003468">
    <property type="entry name" value="PRK05093.1"/>
    <property type="match status" value="1"/>
</dbReference>
<dbReference type="NCBIfam" id="NF009047">
    <property type="entry name" value="PRK12381.1"/>
    <property type="match status" value="1"/>
</dbReference>
<dbReference type="PANTHER" id="PTHR11986">
    <property type="entry name" value="AMINOTRANSFERASE CLASS III"/>
    <property type="match status" value="1"/>
</dbReference>
<dbReference type="PANTHER" id="PTHR11986:SF113">
    <property type="entry name" value="SUCCINYLORNITHINE TRANSAMINASE"/>
    <property type="match status" value="1"/>
</dbReference>
<dbReference type="Pfam" id="PF00202">
    <property type="entry name" value="Aminotran_3"/>
    <property type="match status" value="1"/>
</dbReference>
<dbReference type="PIRSF" id="PIRSF000521">
    <property type="entry name" value="Transaminase_4ab_Lys_Orn"/>
    <property type="match status" value="1"/>
</dbReference>
<dbReference type="SUPFAM" id="SSF53383">
    <property type="entry name" value="PLP-dependent transferases"/>
    <property type="match status" value="1"/>
</dbReference>
<dbReference type="PROSITE" id="PS00600">
    <property type="entry name" value="AA_TRANSFER_CLASS_3"/>
    <property type="match status" value="1"/>
</dbReference>
<organism>
    <name type="scientific">Salmonella paratyphi A (strain ATCC 9150 / SARB42)</name>
    <dbReference type="NCBI Taxonomy" id="295319"/>
    <lineage>
        <taxon>Bacteria</taxon>
        <taxon>Pseudomonadati</taxon>
        <taxon>Pseudomonadota</taxon>
        <taxon>Gammaproteobacteria</taxon>
        <taxon>Enterobacterales</taxon>
        <taxon>Enterobacteriaceae</taxon>
        <taxon>Salmonella</taxon>
    </lineage>
</organism>
<reference key="1">
    <citation type="journal article" date="2004" name="Nat. Genet.">
        <title>Comparison of genome degradation in Paratyphi A and Typhi, human-restricted serovars of Salmonella enterica that cause typhoid.</title>
        <authorList>
            <person name="McClelland M."/>
            <person name="Sanderson K.E."/>
            <person name="Clifton S.W."/>
            <person name="Latreille P."/>
            <person name="Porwollik S."/>
            <person name="Sabo A."/>
            <person name="Meyer R."/>
            <person name="Bieri T."/>
            <person name="Ozersky P."/>
            <person name="McLellan M."/>
            <person name="Harkins C.R."/>
            <person name="Wang C."/>
            <person name="Nguyen C."/>
            <person name="Berghoff A."/>
            <person name="Elliott G."/>
            <person name="Kohlberg S."/>
            <person name="Strong C."/>
            <person name="Du F."/>
            <person name="Carter J."/>
            <person name="Kremizki C."/>
            <person name="Layman D."/>
            <person name="Leonard S."/>
            <person name="Sun H."/>
            <person name="Fulton L."/>
            <person name="Nash W."/>
            <person name="Miner T."/>
            <person name="Minx P."/>
            <person name="Delehaunty K."/>
            <person name="Fronick C."/>
            <person name="Magrini V."/>
            <person name="Nhan M."/>
            <person name="Warren W."/>
            <person name="Florea L."/>
            <person name="Spieth J."/>
            <person name="Wilson R.K."/>
        </authorList>
    </citation>
    <scope>NUCLEOTIDE SEQUENCE [LARGE SCALE GENOMIC DNA]</scope>
    <source>
        <strain>ATCC 9150 / SARB42</strain>
    </source>
</reference>
<name>ASTC_SALPA</name>
<comment type="function">
    <text evidence="1">Catalyzes the transamination of N(2)-succinylornithine and alpha-ketoglutarate into N(2)-succinylglutamate semialdehyde and glutamate. Can also act as an acetylornithine aminotransferase.</text>
</comment>
<comment type="catalytic activity">
    <reaction evidence="1">
        <text>N(2)-succinyl-L-ornithine + 2-oxoglutarate = N-succinyl-L-glutamate 5-semialdehyde + L-glutamate</text>
        <dbReference type="Rhea" id="RHEA:16953"/>
        <dbReference type="ChEBI" id="CHEBI:16810"/>
        <dbReference type="ChEBI" id="CHEBI:29985"/>
        <dbReference type="ChEBI" id="CHEBI:58514"/>
        <dbReference type="ChEBI" id="CHEBI:58520"/>
        <dbReference type="EC" id="2.6.1.81"/>
    </reaction>
</comment>
<comment type="cofactor">
    <cofactor evidence="1">
        <name>pyridoxal 5'-phosphate</name>
        <dbReference type="ChEBI" id="CHEBI:597326"/>
    </cofactor>
</comment>
<comment type="pathway">
    <text evidence="1">Amino-acid degradation; L-arginine degradation via AST pathway; L-glutamate and succinate from L-arginine: step 3/5.</text>
</comment>
<comment type="similarity">
    <text evidence="1">Belongs to the class-III pyridoxal-phosphate-dependent aminotransferase family. AstC subfamily.</text>
</comment>